<organism>
    <name type="scientific">Schizosaccharomyces pombe (strain 972 / ATCC 24843)</name>
    <name type="common">Fission yeast</name>
    <dbReference type="NCBI Taxonomy" id="284812"/>
    <lineage>
        <taxon>Eukaryota</taxon>
        <taxon>Fungi</taxon>
        <taxon>Dikarya</taxon>
        <taxon>Ascomycota</taxon>
        <taxon>Taphrinomycotina</taxon>
        <taxon>Schizosaccharomycetes</taxon>
        <taxon>Schizosaccharomycetales</taxon>
        <taxon>Schizosaccharomycetaceae</taxon>
        <taxon>Schizosaccharomyces</taxon>
    </lineage>
</organism>
<evidence type="ECO:0000256" key="1">
    <source>
        <dbReference type="SAM" id="MobiDB-lite"/>
    </source>
</evidence>
<evidence type="ECO:0000269" key="2">
    <source>
    </source>
</evidence>
<feature type="chain" id="PRO_0000051499" description="Uncharacterized WD repeat-containing protein C2E1P5.05">
    <location>
        <begin position="1"/>
        <end position="524"/>
    </location>
</feature>
<feature type="repeat" description="WD 1">
    <location>
        <begin position="131"/>
        <end position="176"/>
    </location>
</feature>
<feature type="repeat" description="WD 2">
    <location>
        <begin position="206"/>
        <end position="245"/>
    </location>
</feature>
<feature type="repeat" description="WD 3">
    <location>
        <begin position="248"/>
        <end position="287"/>
    </location>
</feature>
<feature type="repeat" description="WD 4">
    <location>
        <begin position="290"/>
        <end position="329"/>
    </location>
</feature>
<feature type="repeat" description="WD 5">
    <location>
        <begin position="342"/>
        <end position="380"/>
    </location>
</feature>
<feature type="repeat" description="WD 6">
    <location>
        <begin position="409"/>
        <end position="448"/>
    </location>
</feature>
<feature type="repeat" description="WD 7">
    <location>
        <begin position="457"/>
        <end position="503"/>
    </location>
</feature>
<feature type="region of interest" description="Disordered" evidence="1">
    <location>
        <begin position="1"/>
        <end position="65"/>
    </location>
</feature>
<feature type="compositionally biased region" description="Basic and acidic residues" evidence="1">
    <location>
        <begin position="21"/>
        <end position="32"/>
    </location>
</feature>
<feature type="compositionally biased region" description="Acidic residues" evidence="1">
    <location>
        <begin position="51"/>
        <end position="64"/>
    </location>
</feature>
<keyword id="KW-0539">Nucleus</keyword>
<keyword id="KW-1185">Reference proteome</keyword>
<keyword id="KW-0677">Repeat</keyword>
<keyword id="KW-0853">WD repeat</keyword>
<dbReference type="EMBL" id="CU329670">
    <property type="protein sequence ID" value="CAB86348.1"/>
    <property type="molecule type" value="Genomic_DNA"/>
</dbReference>
<dbReference type="EMBL" id="AB027987">
    <property type="protein sequence ID" value="BAA87291.1"/>
    <property type="status" value="ALT_SEQ"/>
    <property type="molecule type" value="Genomic_DNA"/>
</dbReference>
<dbReference type="SMR" id="Q9P7C0"/>
<dbReference type="BioGRID" id="277978">
    <property type="interactions" value="11"/>
</dbReference>
<dbReference type="FunCoup" id="Q9P7C0">
    <property type="interactions" value="665"/>
</dbReference>
<dbReference type="STRING" id="284812.Q9P7C0"/>
<dbReference type="iPTMnet" id="Q9P7C0"/>
<dbReference type="PaxDb" id="4896-SPAC2E1P5.05.1"/>
<dbReference type="EnsemblFungi" id="SPAC2E1P5.05.1">
    <property type="protein sequence ID" value="SPAC2E1P5.05.1:pep"/>
    <property type="gene ID" value="SPAC2E1P5.05"/>
</dbReference>
<dbReference type="KEGG" id="spo:2541476"/>
<dbReference type="PomBase" id="SPAC2E1P5.05"/>
<dbReference type="VEuPathDB" id="FungiDB:SPAC2E1P5.05"/>
<dbReference type="eggNOG" id="KOG0299">
    <property type="taxonomic scope" value="Eukaryota"/>
</dbReference>
<dbReference type="HOGENOM" id="CLU_014017_1_0_1"/>
<dbReference type="InParanoid" id="Q9P7C0"/>
<dbReference type="OMA" id="MPEQARM"/>
<dbReference type="PhylomeDB" id="Q9P7C0"/>
<dbReference type="Reactome" id="R-SPO-6791226">
    <property type="pathway name" value="Major pathway of rRNA processing in the nucleolus and cytosol"/>
</dbReference>
<dbReference type="PRO" id="PR:Q9P7C0"/>
<dbReference type="Proteomes" id="UP000002485">
    <property type="component" value="Chromosome I"/>
</dbReference>
<dbReference type="GO" id="GO:0005730">
    <property type="term" value="C:nucleolus"/>
    <property type="evidence" value="ECO:0007005"/>
    <property type="project" value="PomBase"/>
</dbReference>
<dbReference type="GO" id="GO:0005634">
    <property type="term" value="C:nucleus"/>
    <property type="evidence" value="ECO:0007005"/>
    <property type="project" value="PomBase"/>
</dbReference>
<dbReference type="GO" id="GO:0032040">
    <property type="term" value="C:small-subunit processome"/>
    <property type="evidence" value="ECO:0000318"/>
    <property type="project" value="GO_Central"/>
</dbReference>
<dbReference type="GO" id="GO:0030515">
    <property type="term" value="F:snoRNA binding"/>
    <property type="evidence" value="ECO:0000318"/>
    <property type="project" value="GO_Central"/>
</dbReference>
<dbReference type="GO" id="GO:0034511">
    <property type="term" value="F:U3 snoRNA binding"/>
    <property type="evidence" value="ECO:0007669"/>
    <property type="project" value="InterPro"/>
</dbReference>
<dbReference type="GO" id="GO:0030490">
    <property type="term" value="P:maturation of SSU-rRNA"/>
    <property type="evidence" value="ECO:0000266"/>
    <property type="project" value="PomBase"/>
</dbReference>
<dbReference type="Gene3D" id="2.130.10.10">
    <property type="entry name" value="YVTN repeat-like/Quinoprotein amine dehydrogenase"/>
    <property type="match status" value="1"/>
</dbReference>
<dbReference type="InterPro" id="IPR020472">
    <property type="entry name" value="G-protein_beta_WD-40_rep"/>
</dbReference>
<dbReference type="InterPro" id="IPR039241">
    <property type="entry name" value="Rrp9-like"/>
</dbReference>
<dbReference type="InterPro" id="IPR015943">
    <property type="entry name" value="WD40/YVTN_repeat-like_dom_sf"/>
</dbReference>
<dbReference type="InterPro" id="IPR036322">
    <property type="entry name" value="WD40_repeat_dom_sf"/>
</dbReference>
<dbReference type="InterPro" id="IPR001680">
    <property type="entry name" value="WD40_rpt"/>
</dbReference>
<dbReference type="PANTHER" id="PTHR19865">
    <property type="entry name" value="U3 SMALL NUCLEOLAR RNA INTERACTING PROTEIN 2"/>
    <property type="match status" value="1"/>
</dbReference>
<dbReference type="PANTHER" id="PTHR19865:SF0">
    <property type="entry name" value="U3 SMALL NUCLEOLAR RNA-INTERACTING PROTEIN 2"/>
    <property type="match status" value="1"/>
</dbReference>
<dbReference type="Pfam" id="PF00400">
    <property type="entry name" value="WD40"/>
    <property type="match status" value="3"/>
</dbReference>
<dbReference type="PRINTS" id="PR00320">
    <property type="entry name" value="GPROTEINBRPT"/>
</dbReference>
<dbReference type="SMART" id="SM00320">
    <property type="entry name" value="WD40"/>
    <property type="match status" value="5"/>
</dbReference>
<dbReference type="SUPFAM" id="SSF50978">
    <property type="entry name" value="WD40 repeat-like"/>
    <property type="match status" value="1"/>
</dbReference>
<dbReference type="PROSITE" id="PS50082">
    <property type="entry name" value="WD_REPEATS_2"/>
    <property type="match status" value="2"/>
</dbReference>
<dbReference type="PROSITE" id="PS50294">
    <property type="entry name" value="WD_REPEATS_REGION"/>
    <property type="match status" value="1"/>
</dbReference>
<reference key="1">
    <citation type="journal article" date="2002" name="Nature">
        <title>The genome sequence of Schizosaccharomyces pombe.</title>
        <authorList>
            <person name="Wood V."/>
            <person name="Gwilliam R."/>
            <person name="Rajandream M.A."/>
            <person name="Lyne M.H."/>
            <person name="Lyne R."/>
            <person name="Stewart A."/>
            <person name="Sgouros J.G."/>
            <person name="Peat N."/>
            <person name="Hayles J."/>
            <person name="Baker S.G."/>
            <person name="Basham D."/>
            <person name="Bowman S."/>
            <person name="Brooks K."/>
            <person name="Brown D."/>
            <person name="Brown S."/>
            <person name="Chillingworth T."/>
            <person name="Churcher C.M."/>
            <person name="Collins M."/>
            <person name="Connor R."/>
            <person name="Cronin A."/>
            <person name="Davis P."/>
            <person name="Feltwell T."/>
            <person name="Fraser A."/>
            <person name="Gentles S."/>
            <person name="Goble A."/>
            <person name="Hamlin N."/>
            <person name="Harris D.E."/>
            <person name="Hidalgo J."/>
            <person name="Hodgson G."/>
            <person name="Holroyd S."/>
            <person name="Hornsby T."/>
            <person name="Howarth S."/>
            <person name="Huckle E.J."/>
            <person name="Hunt S."/>
            <person name="Jagels K."/>
            <person name="James K.D."/>
            <person name="Jones L."/>
            <person name="Jones M."/>
            <person name="Leather S."/>
            <person name="McDonald S."/>
            <person name="McLean J."/>
            <person name="Mooney P."/>
            <person name="Moule S."/>
            <person name="Mungall K.L."/>
            <person name="Murphy L.D."/>
            <person name="Niblett D."/>
            <person name="Odell C."/>
            <person name="Oliver K."/>
            <person name="O'Neil S."/>
            <person name="Pearson D."/>
            <person name="Quail M.A."/>
            <person name="Rabbinowitsch E."/>
            <person name="Rutherford K.M."/>
            <person name="Rutter S."/>
            <person name="Saunders D."/>
            <person name="Seeger K."/>
            <person name="Sharp S."/>
            <person name="Skelton J."/>
            <person name="Simmonds M.N."/>
            <person name="Squares R."/>
            <person name="Squares S."/>
            <person name="Stevens K."/>
            <person name="Taylor K."/>
            <person name="Taylor R.G."/>
            <person name="Tivey A."/>
            <person name="Walsh S.V."/>
            <person name="Warren T."/>
            <person name="Whitehead S."/>
            <person name="Woodward J.R."/>
            <person name="Volckaert G."/>
            <person name="Aert R."/>
            <person name="Robben J."/>
            <person name="Grymonprez B."/>
            <person name="Weltjens I."/>
            <person name="Vanstreels E."/>
            <person name="Rieger M."/>
            <person name="Schaefer M."/>
            <person name="Mueller-Auer S."/>
            <person name="Gabel C."/>
            <person name="Fuchs M."/>
            <person name="Duesterhoeft A."/>
            <person name="Fritzc C."/>
            <person name="Holzer E."/>
            <person name="Moestl D."/>
            <person name="Hilbert H."/>
            <person name="Borzym K."/>
            <person name="Langer I."/>
            <person name="Beck A."/>
            <person name="Lehrach H."/>
            <person name="Reinhardt R."/>
            <person name="Pohl T.M."/>
            <person name="Eger P."/>
            <person name="Zimmermann W."/>
            <person name="Wedler H."/>
            <person name="Wambutt R."/>
            <person name="Purnelle B."/>
            <person name="Goffeau A."/>
            <person name="Cadieu E."/>
            <person name="Dreano S."/>
            <person name="Gloux S."/>
            <person name="Lelaure V."/>
            <person name="Mottier S."/>
            <person name="Galibert F."/>
            <person name="Aves S.J."/>
            <person name="Xiang Z."/>
            <person name="Hunt C."/>
            <person name="Moore K."/>
            <person name="Hurst S.M."/>
            <person name="Lucas M."/>
            <person name="Rochet M."/>
            <person name="Gaillardin C."/>
            <person name="Tallada V.A."/>
            <person name="Garzon A."/>
            <person name="Thode G."/>
            <person name="Daga R.R."/>
            <person name="Cruzado L."/>
            <person name="Jimenez J."/>
            <person name="Sanchez M."/>
            <person name="del Rey F."/>
            <person name="Benito J."/>
            <person name="Dominguez A."/>
            <person name="Revuelta J.L."/>
            <person name="Moreno S."/>
            <person name="Armstrong J."/>
            <person name="Forsburg S.L."/>
            <person name="Cerutti L."/>
            <person name="Lowe T."/>
            <person name="McCombie W.R."/>
            <person name="Paulsen I."/>
            <person name="Potashkin J."/>
            <person name="Shpakovski G.V."/>
            <person name="Ussery D."/>
            <person name="Barrell B.G."/>
            <person name="Nurse P."/>
        </authorList>
    </citation>
    <scope>NUCLEOTIDE SEQUENCE [LARGE SCALE GENOMIC DNA]</scope>
    <source>
        <strain>972 / ATCC 24843</strain>
    </source>
</reference>
<reference key="2">
    <citation type="journal article" date="2000" name="Genes Cells">
        <title>Large-scale screening of intracellular protein localization in living fission yeast cells by the use of a GFP-fusion genomic DNA library.</title>
        <authorList>
            <person name="Ding D.-Q."/>
            <person name="Tomita Y."/>
            <person name="Yamamoto A."/>
            <person name="Chikashige Y."/>
            <person name="Haraguchi T."/>
            <person name="Hiraoka Y."/>
        </authorList>
    </citation>
    <scope>NUCLEOTIDE SEQUENCE [LARGE SCALE GENOMIC DNA] OF 1-98</scope>
    <scope>SUBCELLULAR LOCATION</scope>
    <source>
        <strain>ATCC 38364 / 968</strain>
    </source>
</reference>
<accession>Q9P7C0</accession>
<accession>Q9UTU6</accession>
<sequence length="524" mass="59135">MSDPFFTRPEHRKRKARSATSKREKENQKLERNGPANEDLASISSESEFNGFEDEIDEENEDTYETAAEKRLRLAREYLDEVKNELVEDGGFDAKEVDRELLASRLKEDVLEKKGQMYLDYTSKINPDVKIETAQLRGRHMRPLVGVVAYENFVYSADKSGLIQKWEALQEKDTENRENDDHEIGKAIKLHFRPIKFSRSRRGENDHVKEITCLAISNDGRWIVTGGLDHRIVIRDSVTLEPQHCWKHHRDAVMGLAMRRGTNEMFSCSADRSIKVWSLDQMSYIETLFGHQDVIFGVDALARERCVSVGGRDRTSRLWKIVEESQLVFRSGGTSMKATAGYMEGSVDCVAMIDEDHFVTGSDNGVIALWSVQRKKPLFTYPLAHGLDPILAPGRHSAETSPDPVTIPPQPRWITSLAAIPYSNLFASGSWDGNIRLWKIAEGLRSFEPLTIATPLSVYGCINSLSLSLQGKGKQSEVRVFAACGRETRVGRWKTLRGIPNSGFVFNIPLTVIPSVTDGDEIDE</sequence>
<name>YKU5_SCHPO</name>
<proteinExistence type="predicted"/>
<comment type="subcellular location">
    <subcellularLocation>
        <location evidence="2">Nucleus</location>
    </subcellularLocation>
</comment>
<protein>
    <recommendedName>
        <fullName>Uncharacterized WD repeat-containing protein C2E1P5.05</fullName>
    </recommendedName>
</protein>
<gene>
    <name type="ORF">SPAC2E1P5.05</name>
</gene>